<proteinExistence type="evidence at protein level"/>
<reference key="1">
    <citation type="journal article" date="1991" name="J. Immunol.">
        <title>Identification and characterization of a new gene family induced during macrophage activation.</title>
        <authorList>
            <person name="Wynn T.A."/>
            <person name="Nicolet C.M."/>
            <person name="Paulnock D.M."/>
        </authorList>
    </citation>
    <scope>NUCLEOTIDE SEQUENCE [MRNA]</scope>
    <scope>INDUCTION</scope>
</reference>
<reference key="2">
    <citation type="journal article" date="1991" name="Mol. Cell. Biol.">
        <title>Interferon-induced guanylate-binding proteins lack an N(T)KXD consensus motif and bind GMP in addition to GDP and GTP.</title>
        <authorList>
            <person name="Cheng Y.-S.E."/>
            <person name="Patterson C.E."/>
            <person name="Staeheli P."/>
        </authorList>
    </citation>
    <scope>NUCLEOTIDE SEQUENCE [MRNA]</scope>
</reference>
<reference key="3">
    <citation type="journal article" date="2004" name="Genome Res.">
        <title>The status, quality, and expansion of the NIH full-length cDNA project: the Mammalian Gene Collection (MGC).</title>
        <authorList>
            <consortium name="The MGC Project Team"/>
        </authorList>
    </citation>
    <scope>NUCLEOTIDE SEQUENCE [LARGE SCALE MRNA]</scope>
</reference>
<reference key="4">
    <citation type="journal article" date="2000" name="Mol. Biol. Cell">
        <title>Murine guanylate-binding protein: incomplete geranylgeranyl isoprenoid modification of an interferon-gamma-inducible guanosine triphosphate-binding protein.</title>
        <authorList>
            <person name="Stickney J.T."/>
            <person name="Buss J.E."/>
        </authorList>
    </citation>
    <scope>ISOPRENYLATION AT CYS-586</scope>
</reference>
<reference key="5">
    <citation type="journal article" date="2007" name="J. Immunol.">
        <title>Extensive characterization of IFN-induced GTPases mGBP1 to mGBP10 involved in host defense.</title>
        <authorList>
            <person name="Degrandi D."/>
            <person name="Konermann C."/>
            <person name="Beuter-Gunia C."/>
            <person name="Kresse A."/>
            <person name="Wurthner J."/>
            <person name="Kurig S."/>
            <person name="Beer S."/>
            <person name="Pfeffer K."/>
        </authorList>
    </citation>
    <scope>FUNCTION</scope>
    <scope>INDUCTION</scope>
    <scope>SUBCELLULAR LOCATION</scope>
</reference>
<reference key="6">
    <citation type="journal article" date="2010" name="Cell">
        <title>A tissue-specific atlas of mouse protein phosphorylation and expression.</title>
        <authorList>
            <person name="Huttlin E.L."/>
            <person name="Jedrychowski M.P."/>
            <person name="Elias J.E."/>
            <person name="Goswami T."/>
            <person name="Rad R."/>
            <person name="Beausoleil S.A."/>
            <person name="Villen J."/>
            <person name="Haas W."/>
            <person name="Sowa M.E."/>
            <person name="Gygi S.P."/>
        </authorList>
    </citation>
    <scope>IDENTIFICATION BY MASS SPECTROMETRY [LARGE SCALE ANALYSIS]</scope>
    <source>
        <tissue>Spleen</tissue>
    </source>
</reference>
<reference key="7">
    <citation type="journal article" date="2011" name="Science">
        <title>A family of IFN-gamma-inducible 65-kD GTPases protects against bacterial infection.</title>
        <authorList>
            <person name="Kim B.H."/>
            <person name="Shenoy A.R."/>
            <person name="Kumar P."/>
            <person name="Das R."/>
            <person name="Tiwari S."/>
            <person name="MacMicking J.D."/>
        </authorList>
    </citation>
    <scope>FUNCTION</scope>
    <scope>CATALYTIC ACTIVITY</scope>
    <scope>DISRUPTION PHENOTYPE</scope>
    <scope>SUBCELLULAR LOCATION</scope>
    <scope>INTERACTION WITH SQSTM1</scope>
    <scope>MUTAGENESIS OF ARG-48 AND SER-52</scope>
</reference>
<reference key="8">
    <citation type="journal article" date="2014" name="Nature">
        <title>Caspase-11 activation requires lysis of pathogen-containing vacuoles by IFN-induced GTPases.</title>
        <authorList>
            <person name="Meunier E."/>
            <person name="Dick M.S."/>
            <person name="Dreier R.F."/>
            <person name="Schuermann N."/>
            <person name="Kenzelmann Broz D."/>
            <person name="Warming S."/>
            <person name="Roose-Girma M."/>
            <person name="Bumann D."/>
            <person name="Kayagaki N."/>
            <person name="Takeda K."/>
            <person name="Yamamoto M."/>
            <person name="Broz P."/>
        </authorList>
    </citation>
    <scope>FUNCTION</scope>
</reference>
<reference key="9">
    <citation type="journal article" date="2014" name="Proc. Natl. Acad. Sci. U.S.A.">
        <title>Guanylate binding proteins promote caspase-11-dependent pyroptosis in response to cytoplasmic LPS.</title>
        <authorList>
            <person name="Pilla D.M."/>
            <person name="Hagar J.A."/>
            <person name="Haldar A.K."/>
            <person name="Mason A.K."/>
            <person name="Degrandi D."/>
            <person name="Pfeffer K."/>
            <person name="Ernst R.K."/>
            <person name="Yamamoto M."/>
            <person name="Miao E.A."/>
            <person name="Coers J."/>
        </authorList>
    </citation>
    <scope>FUNCTION</scope>
</reference>
<feature type="chain" id="PRO_0000190965" description="Guanylate-binding protein 1">
    <location>
        <begin position="1"/>
        <end position="589"/>
    </location>
</feature>
<feature type="propeptide" id="PRO_0000457890" description="Removed in mature form" evidence="1">
    <location>
        <begin position="587"/>
        <end position="589"/>
    </location>
</feature>
<feature type="domain" description="GB1/RHD3-type G" evidence="2">
    <location>
        <begin position="35"/>
        <end position="276"/>
    </location>
</feature>
<feature type="region of interest" description="GTPase domain (Globular)" evidence="1">
    <location>
        <begin position="1"/>
        <end position="309"/>
    </location>
</feature>
<feature type="binding site" evidence="9">
    <location>
        <begin position="47"/>
        <end position="53"/>
    </location>
    <ligand>
        <name>GTP</name>
        <dbReference type="ChEBI" id="CHEBI:37565"/>
    </ligand>
</feature>
<feature type="binding site" evidence="1">
    <location>
        <begin position="67"/>
        <end position="69"/>
    </location>
    <ligand>
        <name>GTP</name>
        <dbReference type="ChEBI" id="CHEBI:37565"/>
    </ligand>
</feature>
<feature type="binding site" evidence="1">
    <location>
        <begin position="97"/>
        <end position="101"/>
    </location>
    <ligand>
        <name>GTP</name>
        <dbReference type="ChEBI" id="CHEBI:37565"/>
    </ligand>
</feature>
<feature type="modified residue" description="Phosphoserine" evidence="1">
    <location>
        <position position="156"/>
    </location>
</feature>
<feature type="modified residue" description="Cysteine methyl ester" evidence="1">
    <location>
        <position position="586"/>
    </location>
</feature>
<feature type="modified residue" description="Phosphothreonine" evidence="1">
    <location>
        <position position="587"/>
    </location>
</feature>
<feature type="lipid moiety-binding region" description="S-farnesyl cysteine" evidence="1">
    <location>
        <position position="586"/>
    </location>
</feature>
<feature type="lipid moiety-binding region" description="S-geranylgeranyl cysteine; partial" evidence="3">
    <location>
        <position position="586"/>
    </location>
</feature>
<feature type="mutagenesis site" description="Loss of localization to cytoplasmic vesicle." evidence="6">
    <original>R</original>
    <variation>P</variation>
    <location>
        <position position="48"/>
    </location>
</feature>
<feature type="mutagenesis site" description="Loss of catalytic activity and localization to cytoplasmic vesicle." evidence="6">
    <original>S</original>
    <variation>N</variation>
    <location>
        <position position="52"/>
    </location>
</feature>
<comment type="function">
    <text evidence="1 5 6 7 8">Interferon (IFN)-inducible GTPase that plays important roles in innate immunity against a diverse range of bacterial, viral and protozoan pathogens (PubMed:18025219, PubMed:21551061, PubMed:24715728, PubMed:24739961). Hydrolyzes GTP to GMP in two consecutive cleavage reactions: GTP is first hydrolyzed to GDP and then to GMP in a processive manner (By similarity). Following infection, recruited to the pathogen-containing vacuoles or vacuole-escaped bacteria and promotes both inflammasome assembly and autophagy (PubMed:21551061, PubMed:24715728, PubMed:24739961). Acts as a positive regulator of inflammasome assembly by facilitating the detection of inflammasome ligands from pathogens (PubMed:24715728, PubMed:24739961). Involved in the lysis of pathogen-containing vacuoles, releasing pathogens into the cytosol (PubMed:24715728, PubMed:24739961). Following pathogen release in the cytosol, forms a protein coat in a GTPase-dependent manner that encapsulates pathogens and promotes the detection of ligands by pattern recognition receptors (By similarity). Plays a key role in inflammasome assembly in response to infection by Gram-negative bacteria: following pathogen release in the cytosol, forms a protein coat that encapsulates Gram-negative bacteria and directly binds to lipopolysaccharide (LPS), disrupting the O-antigen barrier and unmasking lipid A that is that detected by the non-canonical inflammasome effector CASP4/CASP11 (PubMed:24715728, PubMed:24739961). Also promotes recruitment of proteins that mediate bacterial cytolysis, leading to release double-stranded DNA (dsDNA) that activates the AIM2 inflammasome (PubMed:24715728, PubMed:24739961). Involved in autophagy by regulating bacteriolytic peptide generation via its interaction with ubiquitin-binding protein SQSTM1, which delivers monoubiquitinated proteins to autolysosomes for the generation of bacteriolytic peptides (PubMed:21551061). Confers protection to several pathogens, including the bacterial pathogens L.monocytogenes and M.bovis BCG as well as the protozoan pathogen T.gondii (PubMed:18025219, PubMed:21551061). Exhibits antiviral activity against influenza virus (By similarity).</text>
</comment>
<comment type="catalytic activity">
    <reaction evidence="6">
        <text>GTP + H2O = GDP + phosphate + H(+)</text>
        <dbReference type="Rhea" id="RHEA:19669"/>
        <dbReference type="ChEBI" id="CHEBI:15377"/>
        <dbReference type="ChEBI" id="CHEBI:15378"/>
        <dbReference type="ChEBI" id="CHEBI:37565"/>
        <dbReference type="ChEBI" id="CHEBI:43474"/>
        <dbReference type="ChEBI" id="CHEBI:58189"/>
    </reaction>
</comment>
<comment type="catalytic activity">
    <reaction evidence="1">
        <text>GDP + H2O = GMP + phosphate + H(+)</text>
        <dbReference type="Rhea" id="RHEA:22156"/>
        <dbReference type="ChEBI" id="CHEBI:15377"/>
        <dbReference type="ChEBI" id="CHEBI:15378"/>
        <dbReference type="ChEBI" id="CHEBI:43474"/>
        <dbReference type="ChEBI" id="CHEBI:58115"/>
        <dbReference type="ChEBI" id="CHEBI:58189"/>
    </reaction>
    <physiologicalReaction direction="left-to-right" evidence="1">
        <dbReference type="Rhea" id="RHEA:22157"/>
    </physiologicalReaction>
</comment>
<comment type="subunit">
    <text evidence="1 6">Homodimer; homodimerization occurs upon GTP-binding and is required for the second hydrolysis step from GDP to GMP (By similarity). Undergoes conformational changes and oligomerization upon GTP-binding and hydrolysis (By similarity). Heterodimer with other family members, including GBP2, GBP3, GBP4 and GBP5 (By similarity). Dimerization regulates subcellular location to membranous structures (By similarity). Interacts with SQSTM1 (PubMed:21551061). Interacts (when phosphorylated) with 14-3-3 protein sigma (SFN); leading to GBP1 retention in the cytosol and inactivation (By similarity).</text>
</comment>
<comment type="subcellular location">
    <subcellularLocation>
        <location evidence="5 6">Cytoplasmic vesicle membrane</location>
        <topology evidence="1">Lipid-anchor</topology>
        <orientation evidence="1">Cytoplasmic side</orientation>
    </subcellularLocation>
    <subcellularLocation>
        <location evidence="1">Golgi apparatus membrane</location>
        <topology evidence="1">Lipid-anchor</topology>
        <orientation evidence="1">Cytoplasmic side</orientation>
    </subcellularLocation>
    <subcellularLocation>
        <location evidence="1">Cell membrane</location>
        <topology evidence="1">Lipid-anchor</topology>
        <orientation evidence="1">Cytoplasmic side</orientation>
    </subcellularLocation>
    <subcellularLocation>
        <location evidence="1">Cytoplasm</location>
        <location evidence="1">Cytosol</location>
    </subcellularLocation>
    <subcellularLocation>
        <location evidence="1">Secreted</location>
    </subcellularLocation>
    <text evidence="1">Localizes to pathogen-containing vacuoles or to the cell surface of bacteria that escaped vacuoles. Secreted from endothelial cells in the cerebrospinal fluid, upon bacterial challenge and independently of IFNG induction. Golgi membrane localization requires isoprenylation and the presence of another IFNG-induced factor. Sequestered in the cytosol following phosphorylation by PIM1 and subsequent interaction with 14-3-3 protein sigma (SFN).</text>
</comment>
<comment type="induction">
    <text evidence="4 5">By IFNG/IFN-gamma and CpG oligodeoxynucleotides (PubMed:1753106, PubMed:18025219). Up-regulated upon infection by T.gondii or L.monocytogenes (PubMed:18025219).</text>
</comment>
<comment type="PTM">
    <text evidence="1 3">Isoprenylation of mouse GBP1 is incomplete (PubMed:10888661). It persistently exists in the cell as a mixture of C20-modified and (more predominantly) unmodified form (PubMed:10888661). Isoprenylation is required for proper subcellular location (By similarity).</text>
</comment>
<comment type="PTM">
    <text evidence="1">Phosphorylated at Ser-156 by PIM1 in absence of infection, inhibits GBP1: phosphorylation promotes interaction with 14-3-3 protein sigma (SFN), leading to GBP1 retention in the cytosol. Dephosphorylated in response to infection, liberating GBP1.</text>
</comment>
<comment type="disruption phenotype">
    <text evidence="6">Mice exhibit normal T-cell, B-cell, and phagocytic cell profiles in the spleen and Ly6G(+)neutrophils in peripheral blood but macrophages show impaired killing activities (PubMed:21551061). Infection of Gbp1-/- mice results in severe listeriosis or M.bovis BCG-induced morbidity owing to massively increased bacterial replication in the target organs, whereas wild-type mice can control the infection (PubMed:21551061).</text>
</comment>
<comment type="similarity">
    <text evidence="2">Belongs to the TRAFAC class dynamin-like GTPase superfamily. GB1/RHD3 GTPase family. GB1 subfamily.</text>
</comment>
<organism>
    <name type="scientific">Mus musculus</name>
    <name type="common">Mouse</name>
    <dbReference type="NCBI Taxonomy" id="10090"/>
    <lineage>
        <taxon>Eukaryota</taxon>
        <taxon>Metazoa</taxon>
        <taxon>Chordata</taxon>
        <taxon>Craniata</taxon>
        <taxon>Vertebrata</taxon>
        <taxon>Euteleostomi</taxon>
        <taxon>Mammalia</taxon>
        <taxon>Eutheria</taxon>
        <taxon>Euarchontoglires</taxon>
        <taxon>Glires</taxon>
        <taxon>Rodentia</taxon>
        <taxon>Myomorpha</taxon>
        <taxon>Muroidea</taxon>
        <taxon>Muridae</taxon>
        <taxon>Murinae</taxon>
        <taxon>Mus</taxon>
        <taxon>Mus</taxon>
    </lineage>
</organism>
<dbReference type="EC" id="3.6.1.-" evidence="1"/>
<dbReference type="EC" id="3.6.5.-" evidence="6"/>
<dbReference type="EMBL" id="M63961">
    <property type="protein sequence ID" value="AAA39486.1"/>
    <property type="molecule type" value="mRNA"/>
</dbReference>
<dbReference type="EMBL" id="M55544">
    <property type="protein sequence ID" value="AAA37666.1"/>
    <property type="molecule type" value="mRNA"/>
</dbReference>
<dbReference type="EMBL" id="BC108990">
    <property type="protein sequence ID" value="AAI08991.1"/>
    <property type="molecule type" value="mRNA"/>
</dbReference>
<dbReference type="CCDS" id="CCDS38658.1"/>
<dbReference type="PIR" id="A46459">
    <property type="entry name" value="A46459"/>
</dbReference>
<dbReference type="SMR" id="Q01514"/>
<dbReference type="FunCoup" id="Q01514">
    <property type="interactions" value="65"/>
</dbReference>
<dbReference type="STRING" id="10090.ENSMUSP00000029936"/>
<dbReference type="iPTMnet" id="Q01514"/>
<dbReference type="PhosphoSitePlus" id="Q01514"/>
<dbReference type="SwissPalm" id="Q01514"/>
<dbReference type="PaxDb" id="10090-ENSMUSP00000029936"/>
<dbReference type="PeptideAtlas" id="Q01514"/>
<dbReference type="ProteomicsDB" id="272938"/>
<dbReference type="UCSC" id="uc008ror.1">
    <property type="organism name" value="mouse"/>
</dbReference>
<dbReference type="AGR" id="MGI:95666"/>
<dbReference type="MGI" id="MGI:95666">
    <property type="gene designation" value="Gbp1"/>
</dbReference>
<dbReference type="eggNOG" id="KOG2037">
    <property type="taxonomic scope" value="Eukaryota"/>
</dbReference>
<dbReference type="InParanoid" id="Q01514"/>
<dbReference type="PhylomeDB" id="Q01514"/>
<dbReference type="ChiTaRS" id="Gbp2b">
    <property type="organism name" value="mouse"/>
</dbReference>
<dbReference type="PRO" id="PR:Q01514"/>
<dbReference type="Proteomes" id="UP000000589">
    <property type="component" value="Unplaced"/>
</dbReference>
<dbReference type="RNAct" id="Q01514">
    <property type="molecule type" value="protein"/>
</dbReference>
<dbReference type="GO" id="GO:0031410">
    <property type="term" value="C:cytoplasmic vesicle"/>
    <property type="evidence" value="ECO:0000314"/>
    <property type="project" value="MGI"/>
</dbReference>
<dbReference type="GO" id="GO:0030659">
    <property type="term" value="C:cytoplasmic vesicle membrane"/>
    <property type="evidence" value="ECO:0007669"/>
    <property type="project" value="UniProtKB-SubCell"/>
</dbReference>
<dbReference type="GO" id="GO:0005829">
    <property type="term" value="C:cytosol"/>
    <property type="evidence" value="ECO:0007669"/>
    <property type="project" value="UniProtKB-SubCell"/>
</dbReference>
<dbReference type="GO" id="GO:0000139">
    <property type="term" value="C:Golgi membrane"/>
    <property type="evidence" value="ECO:0007669"/>
    <property type="project" value="UniProtKB-SubCell"/>
</dbReference>
<dbReference type="GO" id="GO:0005886">
    <property type="term" value="C:plasma membrane"/>
    <property type="evidence" value="ECO:0007669"/>
    <property type="project" value="UniProtKB-SubCell"/>
</dbReference>
<dbReference type="GO" id="GO:0106139">
    <property type="term" value="C:symbiont cell surface"/>
    <property type="evidence" value="ECO:0000250"/>
    <property type="project" value="UniProtKB"/>
</dbReference>
<dbReference type="GO" id="GO:0020005">
    <property type="term" value="C:symbiont-containing vacuole membrane"/>
    <property type="evidence" value="ECO:0000314"/>
    <property type="project" value="MGI"/>
</dbReference>
<dbReference type="GO" id="GO:0004382">
    <property type="term" value="F:GDP phosphatase activity"/>
    <property type="evidence" value="ECO:0007669"/>
    <property type="project" value="RHEA"/>
</dbReference>
<dbReference type="GO" id="GO:0019002">
    <property type="term" value="F:GMP binding"/>
    <property type="evidence" value="ECO:0000314"/>
    <property type="project" value="MGI"/>
</dbReference>
<dbReference type="GO" id="GO:0005525">
    <property type="term" value="F:GTP binding"/>
    <property type="evidence" value="ECO:0000250"/>
    <property type="project" value="UniProtKB"/>
</dbReference>
<dbReference type="GO" id="GO:0003924">
    <property type="term" value="F:GTPase activity"/>
    <property type="evidence" value="ECO:0000315"/>
    <property type="project" value="UniProtKB"/>
</dbReference>
<dbReference type="GO" id="GO:0001530">
    <property type="term" value="F:lipopolysaccharide binding"/>
    <property type="evidence" value="ECO:0000250"/>
    <property type="project" value="UniProtKB"/>
</dbReference>
<dbReference type="GO" id="GO:0002218">
    <property type="term" value="P:activation of innate immune response"/>
    <property type="evidence" value="ECO:0000315"/>
    <property type="project" value="UniProtKB"/>
</dbReference>
<dbReference type="GO" id="GO:0044406">
    <property type="term" value="P:adhesion of symbiont to host"/>
    <property type="evidence" value="ECO:0000314"/>
    <property type="project" value="MGI"/>
</dbReference>
<dbReference type="GO" id="GO:0035458">
    <property type="term" value="P:cellular response to interferon-beta"/>
    <property type="evidence" value="ECO:0000314"/>
    <property type="project" value="MGI"/>
</dbReference>
<dbReference type="GO" id="GO:0071222">
    <property type="term" value="P:cellular response to lipopolysaccharide"/>
    <property type="evidence" value="ECO:0000315"/>
    <property type="project" value="UniProtKB"/>
</dbReference>
<dbReference type="GO" id="GO:0071346">
    <property type="term" value="P:cellular response to type II interferon"/>
    <property type="evidence" value="ECO:0000314"/>
    <property type="project" value="MGI"/>
</dbReference>
<dbReference type="GO" id="GO:0051715">
    <property type="term" value="P:cytolysis in another organism"/>
    <property type="evidence" value="ECO:0000315"/>
    <property type="project" value="UniProtKB"/>
</dbReference>
<dbReference type="GO" id="GO:0042742">
    <property type="term" value="P:defense response to bacterium"/>
    <property type="evidence" value="ECO:0000315"/>
    <property type="project" value="UniProtKB"/>
</dbReference>
<dbReference type="GO" id="GO:0050830">
    <property type="term" value="P:defense response to Gram-positive bacterium"/>
    <property type="evidence" value="ECO:0000314"/>
    <property type="project" value="MGI"/>
</dbReference>
<dbReference type="GO" id="GO:0042832">
    <property type="term" value="P:defense response to protozoan"/>
    <property type="evidence" value="ECO:0000314"/>
    <property type="project" value="MGI"/>
</dbReference>
<dbReference type="GO" id="GO:0051607">
    <property type="term" value="P:defense response to virus"/>
    <property type="evidence" value="ECO:0007669"/>
    <property type="project" value="UniProtKB-KW"/>
</dbReference>
<dbReference type="GO" id="GO:0160075">
    <property type="term" value="P:non-canonical inflammasome complex assembly"/>
    <property type="evidence" value="ECO:0000250"/>
    <property type="project" value="UniProtKB"/>
</dbReference>
<dbReference type="GO" id="GO:0140639">
    <property type="term" value="P:positive regulation of pyroptotic inflammatory response"/>
    <property type="evidence" value="ECO:0000315"/>
    <property type="project" value="UniProtKB"/>
</dbReference>
<dbReference type="CDD" id="cd01851">
    <property type="entry name" value="GBP"/>
    <property type="match status" value="1"/>
</dbReference>
<dbReference type="CDD" id="cd16269">
    <property type="entry name" value="GBP_C"/>
    <property type="match status" value="1"/>
</dbReference>
<dbReference type="FunFam" id="1.20.1000.10:FF:000001">
    <property type="entry name" value="Guanylate binding protein 1"/>
    <property type="match status" value="1"/>
</dbReference>
<dbReference type="FunFam" id="3.40.50.300:FF:000422">
    <property type="entry name" value="Guanylate-binding protein 1"/>
    <property type="match status" value="1"/>
</dbReference>
<dbReference type="Gene3D" id="1.20.1000.10">
    <property type="entry name" value="Guanylate-binding protein, C-terminal domain"/>
    <property type="match status" value="1"/>
</dbReference>
<dbReference type="Gene3D" id="3.40.50.300">
    <property type="entry name" value="P-loop containing nucleotide triphosphate hydrolases"/>
    <property type="match status" value="1"/>
</dbReference>
<dbReference type="InterPro" id="IPR030386">
    <property type="entry name" value="G_GB1_RHD3_dom"/>
</dbReference>
<dbReference type="InterPro" id="IPR037684">
    <property type="entry name" value="GBP_C"/>
</dbReference>
<dbReference type="InterPro" id="IPR003191">
    <property type="entry name" value="Guanylate-bd/ATL_C"/>
</dbReference>
<dbReference type="InterPro" id="IPR036543">
    <property type="entry name" value="Guanylate-bd_C_sf"/>
</dbReference>
<dbReference type="InterPro" id="IPR015894">
    <property type="entry name" value="Guanylate-bd_N"/>
</dbReference>
<dbReference type="InterPro" id="IPR027417">
    <property type="entry name" value="P-loop_NTPase"/>
</dbReference>
<dbReference type="PANTHER" id="PTHR10751">
    <property type="entry name" value="GUANYLATE BINDING PROTEIN"/>
    <property type="match status" value="1"/>
</dbReference>
<dbReference type="Pfam" id="PF02263">
    <property type="entry name" value="GBP"/>
    <property type="match status" value="1"/>
</dbReference>
<dbReference type="Pfam" id="PF02841">
    <property type="entry name" value="GBP_C"/>
    <property type="match status" value="1"/>
</dbReference>
<dbReference type="SUPFAM" id="SSF48340">
    <property type="entry name" value="Interferon-induced guanylate-binding protein 1 (GBP1), C-terminal domain"/>
    <property type="match status" value="1"/>
</dbReference>
<dbReference type="SUPFAM" id="SSF52540">
    <property type="entry name" value="P-loop containing nucleoside triphosphate hydrolases"/>
    <property type="match status" value="1"/>
</dbReference>
<dbReference type="PROSITE" id="PS51715">
    <property type="entry name" value="G_GB1_RHD3"/>
    <property type="match status" value="1"/>
</dbReference>
<gene>
    <name type="primary">Gbp1</name>
    <name type="synonym">Gbp-1</name>
    <name type="synonym">Mag-1</name>
    <name type="synonym">Mpa1</name>
</gene>
<keyword id="KW-0929">Antimicrobial</keyword>
<keyword id="KW-0051">Antiviral defense</keyword>
<keyword id="KW-1003">Cell membrane</keyword>
<keyword id="KW-0963">Cytoplasm</keyword>
<keyword id="KW-0968">Cytoplasmic vesicle</keyword>
<keyword id="KW-0333">Golgi apparatus</keyword>
<keyword id="KW-0342">GTP-binding</keyword>
<keyword id="KW-0378">Hydrolase</keyword>
<keyword id="KW-0391">Immunity</keyword>
<keyword id="KW-0399">Innate immunity</keyword>
<keyword id="KW-0449">Lipoprotein</keyword>
<keyword id="KW-0472">Membrane</keyword>
<keyword id="KW-0488">Methylation</keyword>
<keyword id="KW-0547">Nucleotide-binding</keyword>
<keyword id="KW-0597">Phosphoprotein</keyword>
<keyword id="KW-0636">Prenylation</keyword>
<keyword id="KW-1185">Reference proteome</keyword>
<keyword id="KW-0964">Secreted</keyword>
<name>GBP1_MOUSE</name>
<accession>Q01514</accession>
<accession>Q32MT4</accession>
<protein>
    <recommendedName>
        <fullName>Guanylate-binding protein 1</fullName>
        <ecNumber evidence="1">3.6.1.-</ecNumber>
        <ecNumber evidence="6">3.6.5.-</ecNumber>
    </recommendedName>
    <alternativeName>
        <fullName>GTP-binding protein 1</fullName>
        <shortName>GBP-1</shortName>
        <shortName>mGBP-1</shortName>
        <shortName>mGBP1</shortName>
    </alternativeName>
    <alternativeName>
        <fullName>Guanine nucleotide-binding protein 1</fullName>
    </alternativeName>
    <alternativeName>
        <fullName>Interferon-gamma-inducible protein MAG-1</fullName>
    </alternativeName>
    <alternativeName>
        <fullName>Interferon-induced guanylate-binding protein 1</fullName>
    </alternativeName>
</protein>
<evidence type="ECO:0000250" key="1">
    <source>
        <dbReference type="UniProtKB" id="P32455"/>
    </source>
</evidence>
<evidence type="ECO:0000255" key="2">
    <source>
        <dbReference type="PROSITE-ProRule" id="PRU01052"/>
    </source>
</evidence>
<evidence type="ECO:0000269" key="3">
    <source>
    </source>
</evidence>
<evidence type="ECO:0000269" key="4">
    <source>
    </source>
</evidence>
<evidence type="ECO:0000269" key="5">
    <source>
    </source>
</evidence>
<evidence type="ECO:0000269" key="6">
    <source>
    </source>
</evidence>
<evidence type="ECO:0000269" key="7">
    <source>
    </source>
</evidence>
<evidence type="ECO:0000269" key="8">
    <source>
    </source>
</evidence>
<evidence type="ECO:0000305" key="9">
    <source>
    </source>
</evidence>
<sequence length="589" mass="67712">MASEIHMSEPMCLIENTEAQLVINQEALRILSAITQPVVVVAIVGLYRTGKSYLMNKLAGKRTGFSLGSTVQSHTKGIWMWCVPHPKKAGQTLVLLDTEGLEDVEKGDNQNDCWIFALAVLLSSTFIYNSIGTINQQAMDQLHYVTELTDLIKSKSSPDQSDVDNSANFVGFFPIFVWTLRDFSLDLEFDGESITPDEYLETSLALRKGTDENTKKFNMPRLCIRKFFPKRKCFIFDRPGDRKQLSKLEWIQEDQLNKEFVEQVAEFTSYIFSYSGVKTLSGGITVNGPRLKSLVQTYVSAICSGELPCMENAVLTLAQIENSAAVQKAITYYEEQMNQKIHMPTETLQELLDLHRTCEREAIEVFMKNSFKDVDQKFQEELGAQLEAKRDAFVKKNMDMSSAHCSDLLEGLFAHLEEEVKQGTFYKPGGYYLFLQRKQELEKKYIQTPGKGLQAEVMLRKYFESKEDLADTLLKMDQSLTEKEKQIEMERIKAEAAEAANRALAEMQKKHEMLMEQKEQSYQEHMKQLTEKMEQERKELMAEQQRIISLKLQEQERLLKQGFQNESLQLRQEIEKIKNMPPPRSCTIL</sequence>